<comment type="catalytic activity">
    <reaction evidence="1">
        <text>1-(5-phospho-beta-D-ribosyl)-5-[(5-phospho-beta-D-ribosylamino)methylideneamino]imidazole-4-carboxamide = 5-[(5-phospho-1-deoxy-D-ribulos-1-ylimino)methylamino]-1-(5-phospho-beta-D-ribosyl)imidazole-4-carboxamide</text>
        <dbReference type="Rhea" id="RHEA:15469"/>
        <dbReference type="ChEBI" id="CHEBI:58435"/>
        <dbReference type="ChEBI" id="CHEBI:58525"/>
        <dbReference type="EC" id="5.3.1.16"/>
    </reaction>
</comment>
<comment type="pathway">
    <text evidence="1">Amino-acid biosynthesis; L-histidine biosynthesis; L-histidine from 5-phospho-alpha-D-ribose 1-diphosphate: step 4/9.</text>
</comment>
<comment type="subcellular location">
    <subcellularLocation>
        <location evidence="1">Cytoplasm</location>
    </subcellularLocation>
</comment>
<comment type="similarity">
    <text evidence="1">Belongs to the HisA/HisF family.</text>
</comment>
<accession>B6JCG4</accession>
<accession>F8BRG1</accession>
<feature type="chain" id="PRO_1000135135" description="1-(5-phosphoribosyl)-5-[(5-phosphoribosylamino)methylideneamino] imidazole-4-carboxamide isomerase">
    <location>
        <begin position="1"/>
        <end position="248"/>
    </location>
</feature>
<feature type="active site" description="Proton acceptor" evidence="1">
    <location>
        <position position="11"/>
    </location>
</feature>
<feature type="active site" description="Proton donor" evidence="1">
    <location>
        <position position="132"/>
    </location>
</feature>
<organism>
    <name type="scientific">Afipia carboxidovorans (strain ATCC 49405 / DSM 1227 / KCTC 32145 / OM5)</name>
    <name type="common">Oligotropha carboxidovorans</name>
    <dbReference type="NCBI Taxonomy" id="504832"/>
    <lineage>
        <taxon>Bacteria</taxon>
        <taxon>Pseudomonadati</taxon>
        <taxon>Pseudomonadota</taxon>
        <taxon>Alphaproteobacteria</taxon>
        <taxon>Hyphomicrobiales</taxon>
        <taxon>Nitrobacteraceae</taxon>
        <taxon>Afipia</taxon>
    </lineage>
</organism>
<proteinExistence type="inferred from homology"/>
<protein>
    <recommendedName>
        <fullName evidence="1">1-(5-phosphoribosyl)-5-[(5-phosphoribosylamino)methylideneamino] imidazole-4-carboxamide isomerase</fullName>
        <ecNumber evidence="1">5.3.1.16</ecNumber>
    </recommendedName>
    <alternativeName>
        <fullName evidence="1">Phosphoribosylformimino-5-aminoimidazole carboxamide ribotide isomerase</fullName>
    </alternativeName>
</protein>
<keyword id="KW-0028">Amino-acid biosynthesis</keyword>
<keyword id="KW-0963">Cytoplasm</keyword>
<keyword id="KW-0368">Histidine biosynthesis</keyword>
<keyword id="KW-0413">Isomerase</keyword>
<keyword id="KW-1185">Reference proteome</keyword>
<sequence length="248" mass="25981">MEAVILFPAIDLKNGQCVRLEQGDMARATVFNLDPAAQARSFQDQGFEYLHVVDLDGAFAGKPQNAQAVEAMLKTVTMPVQLGGGIRDMATLQAWLDKGIARVIIGTAAVRDPAFVKEAAKKHPGRVAVGLDARDGKVAVEGWAETSTVTALEIAQRFEDAGVAAIIFTDIARDGLLKGLNLDATIALADAISIPVIASGGLASIDDVKALLTPRAKKLEGAISGRALYDGRIDPAEALALIKAARAA</sequence>
<evidence type="ECO:0000255" key="1">
    <source>
        <dbReference type="HAMAP-Rule" id="MF_01014"/>
    </source>
</evidence>
<dbReference type="EC" id="5.3.1.16" evidence="1"/>
<dbReference type="EMBL" id="CP001196">
    <property type="protein sequence ID" value="ACI91544.1"/>
    <property type="molecule type" value="Genomic_DNA"/>
</dbReference>
<dbReference type="EMBL" id="CP002826">
    <property type="protein sequence ID" value="AEI04865.1"/>
    <property type="molecule type" value="Genomic_DNA"/>
</dbReference>
<dbReference type="SMR" id="B6JCG4"/>
<dbReference type="STRING" id="504832.OCA5_c01330"/>
<dbReference type="KEGG" id="oca:OCAR_4398"/>
<dbReference type="KEGG" id="ocg:OCA5_c01330"/>
<dbReference type="PATRIC" id="fig|504832.7.peg.140"/>
<dbReference type="eggNOG" id="COG0106">
    <property type="taxonomic scope" value="Bacteria"/>
</dbReference>
<dbReference type="HOGENOM" id="CLU_048577_1_1_5"/>
<dbReference type="UniPathway" id="UPA00031">
    <property type="reaction ID" value="UER00009"/>
</dbReference>
<dbReference type="Proteomes" id="UP000007730">
    <property type="component" value="Chromosome"/>
</dbReference>
<dbReference type="GO" id="GO:0005737">
    <property type="term" value="C:cytoplasm"/>
    <property type="evidence" value="ECO:0007669"/>
    <property type="project" value="UniProtKB-SubCell"/>
</dbReference>
<dbReference type="GO" id="GO:0003949">
    <property type="term" value="F:1-(5-phosphoribosyl)-5-[(5-phosphoribosylamino)methylideneamino]imidazole-4-carboxamide isomerase activity"/>
    <property type="evidence" value="ECO:0007669"/>
    <property type="project" value="UniProtKB-UniRule"/>
</dbReference>
<dbReference type="GO" id="GO:0000105">
    <property type="term" value="P:L-histidine biosynthetic process"/>
    <property type="evidence" value="ECO:0007669"/>
    <property type="project" value="UniProtKB-UniRule"/>
</dbReference>
<dbReference type="GO" id="GO:0000162">
    <property type="term" value="P:L-tryptophan biosynthetic process"/>
    <property type="evidence" value="ECO:0007669"/>
    <property type="project" value="TreeGrafter"/>
</dbReference>
<dbReference type="CDD" id="cd04732">
    <property type="entry name" value="HisA"/>
    <property type="match status" value="1"/>
</dbReference>
<dbReference type="FunFam" id="3.20.20.70:FF:000009">
    <property type="entry name" value="1-(5-phosphoribosyl)-5-[(5-phosphoribosylamino)methylideneamino] imidazole-4-carboxamide isomerase"/>
    <property type="match status" value="1"/>
</dbReference>
<dbReference type="Gene3D" id="3.20.20.70">
    <property type="entry name" value="Aldolase class I"/>
    <property type="match status" value="1"/>
</dbReference>
<dbReference type="HAMAP" id="MF_01014">
    <property type="entry name" value="HisA"/>
    <property type="match status" value="1"/>
</dbReference>
<dbReference type="InterPro" id="IPR013785">
    <property type="entry name" value="Aldolase_TIM"/>
</dbReference>
<dbReference type="InterPro" id="IPR006062">
    <property type="entry name" value="His_biosynth"/>
</dbReference>
<dbReference type="InterPro" id="IPR006063">
    <property type="entry name" value="HisA_bact_arch"/>
</dbReference>
<dbReference type="InterPro" id="IPR044524">
    <property type="entry name" value="Isoase_HisA-like"/>
</dbReference>
<dbReference type="InterPro" id="IPR023016">
    <property type="entry name" value="Isoase_HisA-like_bact"/>
</dbReference>
<dbReference type="InterPro" id="IPR011060">
    <property type="entry name" value="RibuloseP-bd_barrel"/>
</dbReference>
<dbReference type="NCBIfam" id="TIGR00007">
    <property type="entry name" value="1-(5-phosphoribosyl)-5-[(5-phosphoribosylamino)methylideneamino]imidazole-4-carboxamide isomerase"/>
    <property type="match status" value="1"/>
</dbReference>
<dbReference type="NCBIfam" id="NF010112">
    <property type="entry name" value="PRK13585.1"/>
    <property type="match status" value="1"/>
</dbReference>
<dbReference type="PANTHER" id="PTHR43090">
    <property type="entry name" value="1-(5-PHOSPHORIBOSYL)-5-[(5-PHOSPHORIBOSYLAMINO)METHYLIDENEAMINO] IMIDAZOLE-4-CARBOXAMIDE ISOMERASE"/>
    <property type="match status" value="1"/>
</dbReference>
<dbReference type="PANTHER" id="PTHR43090:SF2">
    <property type="entry name" value="1-(5-PHOSPHORIBOSYL)-5-[(5-PHOSPHORIBOSYLAMINO)METHYLIDENEAMINO] IMIDAZOLE-4-CARBOXAMIDE ISOMERASE"/>
    <property type="match status" value="1"/>
</dbReference>
<dbReference type="Pfam" id="PF00977">
    <property type="entry name" value="His_biosynth"/>
    <property type="match status" value="1"/>
</dbReference>
<dbReference type="SUPFAM" id="SSF51366">
    <property type="entry name" value="Ribulose-phoshate binding barrel"/>
    <property type="match status" value="1"/>
</dbReference>
<name>HIS4_AFIC5</name>
<gene>
    <name evidence="1" type="primary">hisA</name>
    <name type="ordered locus">OCAR_4398</name>
    <name type="ordered locus">OCA5_c01330</name>
</gene>
<reference key="1">
    <citation type="journal article" date="2008" name="J. Bacteriol.">
        <title>Genome sequence of the chemolithoautotrophic bacterium Oligotropha carboxidovorans OM5T.</title>
        <authorList>
            <person name="Paul D."/>
            <person name="Bridges S."/>
            <person name="Burgess S.C."/>
            <person name="Dandass Y."/>
            <person name="Lawrence M.L."/>
        </authorList>
    </citation>
    <scope>NUCLEOTIDE SEQUENCE [LARGE SCALE GENOMIC DNA]</scope>
    <source>
        <strain>ATCC 49405 / DSM 1227 / KCTC 32145 / OM5</strain>
    </source>
</reference>
<reference key="2">
    <citation type="journal article" date="2011" name="J. Bacteriol.">
        <title>Complete genome sequences of the chemolithoautotrophic Oligotropha carboxidovorans strains OM4 and OM5.</title>
        <authorList>
            <person name="Volland S."/>
            <person name="Rachinger M."/>
            <person name="Strittmatter A."/>
            <person name="Daniel R."/>
            <person name="Gottschalk G."/>
            <person name="Meyer O."/>
        </authorList>
    </citation>
    <scope>NUCLEOTIDE SEQUENCE [LARGE SCALE GENOMIC DNA]</scope>
    <source>
        <strain>ATCC 49405 / DSM 1227 / KCTC 32145 / OM5</strain>
    </source>
</reference>